<accession>Q92G89</accession>
<reference key="1">
    <citation type="journal article" date="2001" name="Science">
        <title>Mechanisms of evolution in Rickettsia conorii and R. prowazekii.</title>
        <authorList>
            <person name="Ogata H."/>
            <person name="Audic S."/>
            <person name="Renesto-Audiffren P."/>
            <person name="Fournier P.-E."/>
            <person name="Barbe V."/>
            <person name="Samson D."/>
            <person name="Roux V."/>
            <person name="Cossart P."/>
            <person name="Weissenbach J."/>
            <person name="Claverie J.-M."/>
            <person name="Raoult D."/>
        </authorList>
    </citation>
    <scope>NUCLEOTIDE SEQUENCE [LARGE SCALE GENOMIC DNA]</scope>
    <source>
        <strain>ATCC VR-613 / Malish 7</strain>
    </source>
</reference>
<keyword id="KW-0066">ATP synthesis</keyword>
<keyword id="KW-0997">Cell inner membrane</keyword>
<keyword id="KW-1003">Cell membrane</keyword>
<keyword id="KW-0139">CF(1)</keyword>
<keyword id="KW-0375">Hydrogen ion transport</keyword>
<keyword id="KW-0406">Ion transport</keyword>
<keyword id="KW-0472">Membrane</keyword>
<keyword id="KW-0813">Transport</keyword>
<sequence length="112" mass="12145">MNATILVKIITPLSIALEKQAKMVTMSGEEGMFGVLPSHVPMIVSLKAGLVQVYIDDMHKSENTYLISGGVTEVTANYINIATETAINVTNLSEVEIATKLLDLQKTLSDQH</sequence>
<protein>
    <recommendedName>
        <fullName>ATP synthase epsilon chain</fullName>
    </recommendedName>
    <alternativeName>
        <fullName>ATP synthase F1 sector epsilon subunit</fullName>
    </alternativeName>
    <alternativeName>
        <fullName>F-ATPase epsilon subunit</fullName>
    </alternativeName>
</protein>
<feature type="chain" id="PRO_0000188192" description="ATP synthase epsilon chain">
    <location>
        <begin position="1"/>
        <end position="112"/>
    </location>
</feature>
<evidence type="ECO:0000250" key="1"/>
<evidence type="ECO:0000305" key="2"/>
<proteinExistence type="inferred from homology"/>
<name>ATPE_RICCN</name>
<gene>
    <name type="primary">atpC</name>
    <name type="ordered locus">RC1234</name>
</gene>
<comment type="function">
    <text evidence="1">Produces ATP from ADP in the presence of a proton gradient across the membrane.</text>
</comment>
<comment type="subunit">
    <text>F-type ATPases have 2 components, CF(1) - the catalytic core - and CF(0) - the membrane proton channel. CF(1) has five subunits: alpha(3), beta(3), gamma(1), delta(1), epsilon(1). CF(0) has three main subunits: a, b and c.</text>
</comment>
<comment type="subcellular location">
    <subcellularLocation>
        <location evidence="1">Cell inner membrane</location>
        <topology evidence="1">Peripheral membrane protein</topology>
    </subcellularLocation>
</comment>
<comment type="similarity">
    <text evidence="2">Belongs to the ATPase epsilon chain family.</text>
</comment>
<dbReference type="EMBL" id="AE006914">
    <property type="protein sequence ID" value="AAL03772.1"/>
    <property type="molecule type" value="Genomic_DNA"/>
</dbReference>
<dbReference type="PIR" id="B97854">
    <property type="entry name" value="B97854"/>
</dbReference>
<dbReference type="RefSeq" id="WP_010977799.1">
    <property type="nucleotide sequence ID" value="NC_003103.1"/>
</dbReference>
<dbReference type="SMR" id="Q92G89"/>
<dbReference type="GeneID" id="928386"/>
<dbReference type="KEGG" id="rco:RC1234"/>
<dbReference type="PATRIC" id="fig|272944.4.peg.1415"/>
<dbReference type="HOGENOM" id="CLU_084338_2_1_5"/>
<dbReference type="Proteomes" id="UP000000816">
    <property type="component" value="Chromosome"/>
</dbReference>
<dbReference type="GO" id="GO:0005886">
    <property type="term" value="C:plasma membrane"/>
    <property type="evidence" value="ECO:0007669"/>
    <property type="project" value="UniProtKB-SubCell"/>
</dbReference>
<dbReference type="GO" id="GO:0045259">
    <property type="term" value="C:proton-transporting ATP synthase complex"/>
    <property type="evidence" value="ECO:0007669"/>
    <property type="project" value="UniProtKB-KW"/>
</dbReference>
<dbReference type="GO" id="GO:0005524">
    <property type="term" value="F:ATP binding"/>
    <property type="evidence" value="ECO:0007669"/>
    <property type="project" value="UniProtKB-UniRule"/>
</dbReference>
<dbReference type="GO" id="GO:0046933">
    <property type="term" value="F:proton-transporting ATP synthase activity, rotational mechanism"/>
    <property type="evidence" value="ECO:0007669"/>
    <property type="project" value="UniProtKB-UniRule"/>
</dbReference>
<dbReference type="CDD" id="cd12152">
    <property type="entry name" value="F1-ATPase_delta"/>
    <property type="match status" value="1"/>
</dbReference>
<dbReference type="Gene3D" id="2.60.15.10">
    <property type="entry name" value="F0F1 ATP synthase delta/epsilon subunit, N-terminal"/>
    <property type="match status" value="1"/>
</dbReference>
<dbReference type="HAMAP" id="MF_00530">
    <property type="entry name" value="ATP_synth_epsil_bac"/>
    <property type="match status" value="1"/>
</dbReference>
<dbReference type="InterPro" id="IPR001469">
    <property type="entry name" value="ATP_synth_F1_dsu/esu"/>
</dbReference>
<dbReference type="InterPro" id="IPR020546">
    <property type="entry name" value="ATP_synth_F1_dsu/esu_N"/>
</dbReference>
<dbReference type="InterPro" id="IPR036771">
    <property type="entry name" value="ATPsynth_dsu/esu_N"/>
</dbReference>
<dbReference type="NCBIfam" id="TIGR01216">
    <property type="entry name" value="ATP_synt_epsi"/>
    <property type="match status" value="1"/>
</dbReference>
<dbReference type="NCBIfam" id="NF002403">
    <property type="entry name" value="PRK01474.1"/>
    <property type="match status" value="1"/>
</dbReference>
<dbReference type="PANTHER" id="PTHR13822">
    <property type="entry name" value="ATP SYNTHASE DELTA/EPSILON CHAIN"/>
    <property type="match status" value="1"/>
</dbReference>
<dbReference type="PANTHER" id="PTHR13822:SF10">
    <property type="entry name" value="ATP SYNTHASE EPSILON CHAIN, CHLOROPLASTIC"/>
    <property type="match status" value="1"/>
</dbReference>
<dbReference type="Pfam" id="PF02823">
    <property type="entry name" value="ATP-synt_DE_N"/>
    <property type="match status" value="1"/>
</dbReference>
<dbReference type="SUPFAM" id="SSF51344">
    <property type="entry name" value="Epsilon subunit of F1F0-ATP synthase N-terminal domain"/>
    <property type="match status" value="1"/>
</dbReference>
<organism>
    <name type="scientific">Rickettsia conorii (strain ATCC VR-613 / Malish 7)</name>
    <dbReference type="NCBI Taxonomy" id="272944"/>
    <lineage>
        <taxon>Bacteria</taxon>
        <taxon>Pseudomonadati</taxon>
        <taxon>Pseudomonadota</taxon>
        <taxon>Alphaproteobacteria</taxon>
        <taxon>Rickettsiales</taxon>
        <taxon>Rickettsiaceae</taxon>
        <taxon>Rickettsieae</taxon>
        <taxon>Rickettsia</taxon>
        <taxon>spotted fever group</taxon>
    </lineage>
</organism>